<evidence type="ECO:0000255" key="1">
    <source>
        <dbReference type="HAMAP-Rule" id="MF_00480"/>
    </source>
</evidence>
<evidence type="ECO:0000305" key="2"/>
<organism>
    <name type="scientific">Prochlorococcus marinus (strain NATL1A)</name>
    <dbReference type="NCBI Taxonomy" id="167555"/>
    <lineage>
        <taxon>Bacteria</taxon>
        <taxon>Bacillati</taxon>
        <taxon>Cyanobacteriota</taxon>
        <taxon>Cyanophyceae</taxon>
        <taxon>Synechococcales</taxon>
        <taxon>Prochlorococcaceae</taxon>
        <taxon>Prochlorococcus</taxon>
    </lineage>
</organism>
<sequence length="156" mass="17652">MSRRNAAEKRPVLPDPQFNNRLASMMVHRLMKHGKKSTAQKILSDAFGLINERTGSDPIELFETAVKNVTPLVEVRARRVGGATYQVPMEVRQERGIAMALRWLVNFSRSRNGRSMAQKLAGELMDAANEAGNAVRKREETHKMAEANKAFAHYRY</sequence>
<name>RS7_PROM1</name>
<proteinExistence type="inferred from homology"/>
<keyword id="KW-0687">Ribonucleoprotein</keyword>
<keyword id="KW-0689">Ribosomal protein</keyword>
<keyword id="KW-0694">RNA-binding</keyword>
<keyword id="KW-0699">rRNA-binding</keyword>
<keyword id="KW-0820">tRNA-binding</keyword>
<protein>
    <recommendedName>
        <fullName evidence="1">Small ribosomal subunit protein uS7</fullName>
    </recommendedName>
    <alternativeName>
        <fullName evidence="2">30S ribosomal protein S7</fullName>
    </alternativeName>
</protein>
<accession>A2C4U7</accession>
<dbReference type="EMBL" id="CP000553">
    <property type="protein sequence ID" value="ABM76507.1"/>
    <property type="molecule type" value="Genomic_DNA"/>
</dbReference>
<dbReference type="RefSeq" id="WP_011295420.1">
    <property type="nucleotide sequence ID" value="NC_008819.1"/>
</dbReference>
<dbReference type="SMR" id="A2C4U7"/>
<dbReference type="KEGG" id="pme:NATL1_19511"/>
<dbReference type="eggNOG" id="COG0049">
    <property type="taxonomic scope" value="Bacteria"/>
</dbReference>
<dbReference type="HOGENOM" id="CLU_072226_1_1_3"/>
<dbReference type="Proteomes" id="UP000002592">
    <property type="component" value="Chromosome"/>
</dbReference>
<dbReference type="GO" id="GO:0015935">
    <property type="term" value="C:small ribosomal subunit"/>
    <property type="evidence" value="ECO:0007669"/>
    <property type="project" value="InterPro"/>
</dbReference>
<dbReference type="GO" id="GO:0019843">
    <property type="term" value="F:rRNA binding"/>
    <property type="evidence" value="ECO:0007669"/>
    <property type="project" value="UniProtKB-UniRule"/>
</dbReference>
<dbReference type="GO" id="GO:0003735">
    <property type="term" value="F:structural constituent of ribosome"/>
    <property type="evidence" value="ECO:0007669"/>
    <property type="project" value="InterPro"/>
</dbReference>
<dbReference type="GO" id="GO:0000049">
    <property type="term" value="F:tRNA binding"/>
    <property type="evidence" value="ECO:0007669"/>
    <property type="project" value="UniProtKB-UniRule"/>
</dbReference>
<dbReference type="GO" id="GO:0006412">
    <property type="term" value="P:translation"/>
    <property type="evidence" value="ECO:0007669"/>
    <property type="project" value="UniProtKB-UniRule"/>
</dbReference>
<dbReference type="CDD" id="cd14871">
    <property type="entry name" value="uS7_Chloroplast"/>
    <property type="match status" value="1"/>
</dbReference>
<dbReference type="FunFam" id="1.10.455.10:FF:000001">
    <property type="entry name" value="30S ribosomal protein S7"/>
    <property type="match status" value="1"/>
</dbReference>
<dbReference type="Gene3D" id="1.10.455.10">
    <property type="entry name" value="Ribosomal protein S7 domain"/>
    <property type="match status" value="1"/>
</dbReference>
<dbReference type="HAMAP" id="MF_00480_B">
    <property type="entry name" value="Ribosomal_uS7_B"/>
    <property type="match status" value="1"/>
</dbReference>
<dbReference type="InterPro" id="IPR000235">
    <property type="entry name" value="Ribosomal_uS7"/>
</dbReference>
<dbReference type="InterPro" id="IPR005717">
    <property type="entry name" value="Ribosomal_uS7_bac/org-type"/>
</dbReference>
<dbReference type="InterPro" id="IPR020606">
    <property type="entry name" value="Ribosomal_uS7_CS"/>
</dbReference>
<dbReference type="InterPro" id="IPR023798">
    <property type="entry name" value="Ribosomal_uS7_dom"/>
</dbReference>
<dbReference type="InterPro" id="IPR036823">
    <property type="entry name" value="Ribosomal_uS7_dom_sf"/>
</dbReference>
<dbReference type="NCBIfam" id="TIGR01029">
    <property type="entry name" value="rpsG_bact"/>
    <property type="match status" value="1"/>
</dbReference>
<dbReference type="PANTHER" id="PTHR11205">
    <property type="entry name" value="RIBOSOMAL PROTEIN S7"/>
    <property type="match status" value="1"/>
</dbReference>
<dbReference type="Pfam" id="PF00177">
    <property type="entry name" value="Ribosomal_S7"/>
    <property type="match status" value="1"/>
</dbReference>
<dbReference type="PIRSF" id="PIRSF002122">
    <property type="entry name" value="RPS7p_RPS7a_RPS5e_RPS7o"/>
    <property type="match status" value="1"/>
</dbReference>
<dbReference type="SUPFAM" id="SSF47973">
    <property type="entry name" value="Ribosomal protein S7"/>
    <property type="match status" value="1"/>
</dbReference>
<dbReference type="PROSITE" id="PS00052">
    <property type="entry name" value="RIBOSOMAL_S7"/>
    <property type="match status" value="1"/>
</dbReference>
<reference key="1">
    <citation type="journal article" date="2007" name="PLoS Genet.">
        <title>Patterns and implications of gene gain and loss in the evolution of Prochlorococcus.</title>
        <authorList>
            <person name="Kettler G.C."/>
            <person name="Martiny A.C."/>
            <person name="Huang K."/>
            <person name="Zucker J."/>
            <person name="Coleman M.L."/>
            <person name="Rodrigue S."/>
            <person name="Chen F."/>
            <person name="Lapidus A."/>
            <person name="Ferriera S."/>
            <person name="Johnson J."/>
            <person name="Steglich C."/>
            <person name="Church G.M."/>
            <person name="Richardson P."/>
            <person name="Chisholm S.W."/>
        </authorList>
    </citation>
    <scope>NUCLEOTIDE SEQUENCE [LARGE SCALE GENOMIC DNA]</scope>
    <source>
        <strain>NATL1A</strain>
    </source>
</reference>
<gene>
    <name evidence="1" type="primary">rpsG</name>
    <name evidence="1" type="synonym">rps7</name>
    <name type="ordered locus">NATL1_19511</name>
</gene>
<comment type="function">
    <text evidence="1">One of the primary rRNA binding proteins, it binds directly to 16S rRNA where it nucleates assembly of the head domain of the 30S subunit. Is located at the subunit interface close to the decoding center, probably blocks exit of the E-site tRNA.</text>
</comment>
<comment type="subunit">
    <text evidence="1">Part of the 30S ribosomal subunit. Contacts proteins S9 and S11.</text>
</comment>
<comment type="similarity">
    <text evidence="1">Belongs to the universal ribosomal protein uS7 family.</text>
</comment>
<feature type="chain" id="PRO_1000014255" description="Small ribosomal subunit protein uS7">
    <location>
        <begin position="1"/>
        <end position="156"/>
    </location>
</feature>